<reference key="1">
    <citation type="submission" date="2008-08" db="EMBL/GenBank/DDBJ databases">
        <title>Complete sequence of Acidithiobacillus ferrooxidans ATCC 53993.</title>
        <authorList>
            <person name="Lucas S."/>
            <person name="Copeland A."/>
            <person name="Lapidus A."/>
            <person name="Glavina del Rio T."/>
            <person name="Dalin E."/>
            <person name="Tice H."/>
            <person name="Bruce D."/>
            <person name="Goodwin L."/>
            <person name="Pitluck S."/>
            <person name="Sims D."/>
            <person name="Brettin T."/>
            <person name="Detter J.C."/>
            <person name="Han C."/>
            <person name="Kuske C.R."/>
            <person name="Larimer F."/>
            <person name="Land M."/>
            <person name="Hauser L."/>
            <person name="Kyrpides N."/>
            <person name="Lykidis A."/>
            <person name="Borole A.P."/>
        </authorList>
    </citation>
    <scope>NUCLEOTIDE SEQUENCE [LARGE SCALE GENOMIC DNA]</scope>
    <source>
        <strain>ATCC 53993 / BNL-5-31</strain>
    </source>
</reference>
<protein>
    <recommendedName>
        <fullName evidence="1">Anthranilate phosphoribosyltransferase</fullName>
        <ecNumber evidence="1">2.4.2.18</ecNumber>
    </recommendedName>
</protein>
<feature type="chain" id="PRO_1000099774" description="Anthranilate phosphoribosyltransferase">
    <location>
        <begin position="1"/>
        <end position="338"/>
    </location>
</feature>
<feature type="binding site" evidence="1">
    <location>
        <position position="81"/>
    </location>
    <ligand>
        <name>5-phospho-alpha-D-ribose 1-diphosphate</name>
        <dbReference type="ChEBI" id="CHEBI:58017"/>
    </ligand>
</feature>
<feature type="binding site" evidence="1">
    <location>
        <position position="81"/>
    </location>
    <ligand>
        <name>anthranilate</name>
        <dbReference type="ChEBI" id="CHEBI:16567"/>
        <label>1</label>
    </ligand>
</feature>
<feature type="binding site" evidence="1">
    <location>
        <begin position="84"/>
        <end position="85"/>
    </location>
    <ligand>
        <name>5-phospho-alpha-D-ribose 1-diphosphate</name>
        <dbReference type="ChEBI" id="CHEBI:58017"/>
    </ligand>
</feature>
<feature type="binding site" evidence="1">
    <location>
        <position position="89"/>
    </location>
    <ligand>
        <name>5-phospho-alpha-D-ribose 1-diphosphate</name>
        <dbReference type="ChEBI" id="CHEBI:58017"/>
    </ligand>
</feature>
<feature type="binding site" evidence="1">
    <location>
        <begin position="91"/>
        <end position="94"/>
    </location>
    <ligand>
        <name>5-phospho-alpha-D-ribose 1-diphosphate</name>
        <dbReference type="ChEBI" id="CHEBI:58017"/>
    </ligand>
</feature>
<feature type="binding site" evidence="1">
    <location>
        <position position="93"/>
    </location>
    <ligand>
        <name>Mg(2+)</name>
        <dbReference type="ChEBI" id="CHEBI:18420"/>
        <label>1</label>
    </ligand>
</feature>
<feature type="binding site" evidence="1">
    <location>
        <begin position="109"/>
        <end position="117"/>
    </location>
    <ligand>
        <name>5-phospho-alpha-D-ribose 1-diphosphate</name>
        <dbReference type="ChEBI" id="CHEBI:58017"/>
    </ligand>
</feature>
<feature type="binding site" evidence="1">
    <location>
        <position position="112"/>
    </location>
    <ligand>
        <name>anthranilate</name>
        <dbReference type="ChEBI" id="CHEBI:16567"/>
        <label>1</label>
    </ligand>
</feature>
<feature type="binding site" evidence="1">
    <location>
        <position position="121"/>
    </location>
    <ligand>
        <name>5-phospho-alpha-D-ribose 1-diphosphate</name>
        <dbReference type="ChEBI" id="CHEBI:58017"/>
    </ligand>
</feature>
<feature type="binding site" evidence="1">
    <location>
        <position position="167"/>
    </location>
    <ligand>
        <name>anthranilate</name>
        <dbReference type="ChEBI" id="CHEBI:16567"/>
        <label>2</label>
    </ligand>
</feature>
<feature type="binding site" evidence="1">
    <location>
        <position position="226"/>
    </location>
    <ligand>
        <name>Mg(2+)</name>
        <dbReference type="ChEBI" id="CHEBI:18420"/>
        <label>2</label>
    </ligand>
</feature>
<feature type="binding site" evidence="1">
    <location>
        <position position="227"/>
    </location>
    <ligand>
        <name>Mg(2+)</name>
        <dbReference type="ChEBI" id="CHEBI:18420"/>
        <label>1</label>
    </ligand>
</feature>
<feature type="binding site" evidence="1">
    <location>
        <position position="227"/>
    </location>
    <ligand>
        <name>Mg(2+)</name>
        <dbReference type="ChEBI" id="CHEBI:18420"/>
        <label>2</label>
    </ligand>
</feature>
<proteinExistence type="inferred from homology"/>
<keyword id="KW-0028">Amino-acid biosynthesis</keyword>
<keyword id="KW-0057">Aromatic amino acid biosynthesis</keyword>
<keyword id="KW-0328">Glycosyltransferase</keyword>
<keyword id="KW-0460">Magnesium</keyword>
<keyword id="KW-0479">Metal-binding</keyword>
<keyword id="KW-0808">Transferase</keyword>
<keyword id="KW-0822">Tryptophan biosynthesis</keyword>
<accession>B5ERI3</accession>
<organism>
    <name type="scientific">Acidithiobacillus ferrooxidans (strain ATCC 53993 / BNL-5-31)</name>
    <name type="common">Leptospirillum ferrooxidans (ATCC 53993)</name>
    <dbReference type="NCBI Taxonomy" id="380394"/>
    <lineage>
        <taxon>Bacteria</taxon>
        <taxon>Pseudomonadati</taxon>
        <taxon>Pseudomonadota</taxon>
        <taxon>Acidithiobacillia</taxon>
        <taxon>Acidithiobacillales</taxon>
        <taxon>Acidithiobacillaceae</taxon>
        <taxon>Acidithiobacillus</taxon>
    </lineage>
</organism>
<gene>
    <name evidence="1" type="primary">trpD</name>
    <name type="ordered locus">Lferr_2844</name>
</gene>
<comment type="function">
    <text evidence="1">Catalyzes the transfer of the phosphoribosyl group of 5-phosphorylribose-1-pyrophosphate (PRPP) to anthranilate to yield N-(5'-phosphoribosyl)-anthranilate (PRA).</text>
</comment>
<comment type="catalytic activity">
    <reaction evidence="1">
        <text>N-(5-phospho-beta-D-ribosyl)anthranilate + diphosphate = 5-phospho-alpha-D-ribose 1-diphosphate + anthranilate</text>
        <dbReference type="Rhea" id="RHEA:11768"/>
        <dbReference type="ChEBI" id="CHEBI:16567"/>
        <dbReference type="ChEBI" id="CHEBI:18277"/>
        <dbReference type="ChEBI" id="CHEBI:33019"/>
        <dbReference type="ChEBI" id="CHEBI:58017"/>
        <dbReference type="EC" id="2.4.2.18"/>
    </reaction>
</comment>
<comment type="cofactor">
    <cofactor evidence="1">
        <name>Mg(2+)</name>
        <dbReference type="ChEBI" id="CHEBI:18420"/>
    </cofactor>
    <text evidence="1">Binds 2 magnesium ions per monomer.</text>
</comment>
<comment type="pathway">
    <text evidence="1">Amino-acid biosynthesis; L-tryptophan biosynthesis; L-tryptophan from chorismate: step 2/5.</text>
</comment>
<comment type="subunit">
    <text evidence="1">Homodimer.</text>
</comment>
<comment type="similarity">
    <text evidence="1">Belongs to the anthranilate phosphoribosyltransferase family.</text>
</comment>
<name>TRPD_ACIF5</name>
<evidence type="ECO:0000255" key="1">
    <source>
        <dbReference type="HAMAP-Rule" id="MF_00211"/>
    </source>
</evidence>
<sequence>MIVRDILEQIVAGQDLSRKETETVFAAIMAGAWTPAQIGALLMGLRMKGQRVEELVGATQALRACMTRVEVSTDHLLDTCGTGGDALSTFNISTVSAVVAAAGGARVAKHGNRSMVSRSGSADVLEAAGLRMDMSPAEVADSIERIGIGFLFAPAHHGAMRYAVGPRKELAIRSLFNLMGPLSNPAGAPHQVLGVYAERWLIPMAEAARELGSRHVLVVHGHDGLDEISLSGPSDIAELKDGMISRSRIQPEDFGLSSAPLATLQIDSVAAALAAAEEVLQNRPGPRRDVVLLNAGAALYAADVVPDMAVGVVVARAVLKSGAAWDKWQALLGRTSQG</sequence>
<dbReference type="EC" id="2.4.2.18" evidence="1"/>
<dbReference type="EMBL" id="CP001132">
    <property type="protein sequence ID" value="ACH85029.1"/>
    <property type="molecule type" value="Genomic_DNA"/>
</dbReference>
<dbReference type="RefSeq" id="WP_012537673.1">
    <property type="nucleotide sequence ID" value="NC_011206.1"/>
</dbReference>
<dbReference type="SMR" id="B5ERI3"/>
<dbReference type="GeneID" id="65282223"/>
<dbReference type="KEGG" id="afe:Lferr_2844"/>
<dbReference type="eggNOG" id="COG0547">
    <property type="taxonomic scope" value="Bacteria"/>
</dbReference>
<dbReference type="HOGENOM" id="CLU_034315_2_1_6"/>
<dbReference type="UniPathway" id="UPA00035">
    <property type="reaction ID" value="UER00041"/>
</dbReference>
<dbReference type="GO" id="GO:0005829">
    <property type="term" value="C:cytosol"/>
    <property type="evidence" value="ECO:0007669"/>
    <property type="project" value="TreeGrafter"/>
</dbReference>
<dbReference type="GO" id="GO:0004048">
    <property type="term" value="F:anthranilate phosphoribosyltransferase activity"/>
    <property type="evidence" value="ECO:0007669"/>
    <property type="project" value="UniProtKB-UniRule"/>
</dbReference>
<dbReference type="GO" id="GO:0000287">
    <property type="term" value="F:magnesium ion binding"/>
    <property type="evidence" value="ECO:0007669"/>
    <property type="project" value="UniProtKB-UniRule"/>
</dbReference>
<dbReference type="GO" id="GO:0000162">
    <property type="term" value="P:L-tryptophan biosynthetic process"/>
    <property type="evidence" value="ECO:0007669"/>
    <property type="project" value="UniProtKB-UniRule"/>
</dbReference>
<dbReference type="FunFam" id="3.40.1030.10:FF:000002">
    <property type="entry name" value="Anthranilate phosphoribosyltransferase"/>
    <property type="match status" value="1"/>
</dbReference>
<dbReference type="Gene3D" id="3.40.1030.10">
    <property type="entry name" value="Nucleoside phosphorylase/phosphoribosyltransferase catalytic domain"/>
    <property type="match status" value="1"/>
</dbReference>
<dbReference type="Gene3D" id="1.20.970.10">
    <property type="entry name" value="Transferase, Pyrimidine Nucleoside Phosphorylase, Chain C"/>
    <property type="match status" value="1"/>
</dbReference>
<dbReference type="HAMAP" id="MF_00211">
    <property type="entry name" value="TrpD"/>
    <property type="match status" value="1"/>
</dbReference>
<dbReference type="InterPro" id="IPR005940">
    <property type="entry name" value="Anthranilate_Pribosyl_Tfrase"/>
</dbReference>
<dbReference type="InterPro" id="IPR000312">
    <property type="entry name" value="Glycosyl_Trfase_fam3"/>
</dbReference>
<dbReference type="InterPro" id="IPR017459">
    <property type="entry name" value="Glycosyl_Trfase_fam3_N_dom"/>
</dbReference>
<dbReference type="InterPro" id="IPR036320">
    <property type="entry name" value="Glycosyl_Trfase_fam3_N_dom_sf"/>
</dbReference>
<dbReference type="InterPro" id="IPR035902">
    <property type="entry name" value="Nuc_phospho_transferase"/>
</dbReference>
<dbReference type="NCBIfam" id="TIGR01245">
    <property type="entry name" value="trpD"/>
    <property type="match status" value="1"/>
</dbReference>
<dbReference type="PANTHER" id="PTHR43285">
    <property type="entry name" value="ANTHRANILATE PHOSPHORIBOSYLTRANSFERASE"/>
    <property type="match status" value="1"/>
</dbReference>
<dbReference type="PANTHER" id="PTHR43285:SF2">
    <property type="entry name" value="ANTHRANILATE PHOSPHORIBOSYLTRANSFERASE"/>
    <property type="match status" value="1"/>
</dbReference>
<dbReference type="Pfam" id="PF02885">
    <property type="entry name" value="Glycos_trans_3N"/>
    <property type="match status" value="1"/>
</dbReference>
<dbReference type="Pfam" id="PF00591">
    <property type="entry name" value="Glycos_transf_3"/>
    <property type="match status" value="1"/>
</dbReference>
<dbReference type="SUPFAM" id="SSF52418">
    <property type="entry name" value="Nucleoside phosphorylase/phosphoribosyltransferase catalytic domain"/>
    <property type="match status" value="1"/>
</dbReference>
<dbReference type="SUPFAM" id="SSF47648">
    <property type="entry name" value="Nucleoside phosphorylase/phosphoribosyltransferase N-terminal domain"/>
    <property type="match status" value="1"/>
</dbReference>